<feature type="chain" id="PRO_0000126955" description="Phenylalanine--tRNA ligase beta subunit">
    <location>
        <begin position="1"/>
        <end position="800"/>
    </location>
</feature>
<feature type="domain" description="tRNA-binding" evidence="1">
    <location>
        <begin position="39"/>
        <end position="154"/>
    </location>
</feature>
<feature type="domain" description="B5" evidence="1">
    <location>
        <begin position="408"/>
        <end position="483"/>
    </location>
</feature>
<feature type="domain" description="FDX-ACB" evidence="1">
    <location>
        <begin position="708"/>
        <end position="800"/>
    </location>
</feature>
<feature type="binding site" evidence="1">
    <location>
        <position position="461"/>
    </location>
    <ligand>
        <name>Mg(2+)</name>
        <dbReference type="ChEBI" id="CHEBI:18420"/>
        <note>shared with alpha subunit</note>
    </ligand>
</feature>
<feature type="binding site" evidence="1">
    <location>
        <position position="467"/>
    </location>
    <ligand>
        <name>Mg(2+)</name>
        <dbReference type="ChEBI" id="CHEBI:18420"/>
        <note>shared with alpha subunit</note>
    </ligand>
</feature>
<feature type="binding site" evidence="1">
    <location>
        <position position="470"/>
    </location>
    <ligand>
        <name>Mg(2+)</name>
        <dbReference type="ChEBI" id="CHEBI:18420"/>
        <note>shared with alpha subunit</note>
    </ligand>
</feature>
<feature type="binding site" evidence="1">
    <location>
        <position position="471"/>
    </location>
    <ligand>
        <name>Mg(2+)</name>
        <dbReference type="ChEBI" id="CHEBI:18420"/>
        <note>shared with alpha subunit</note>
    </ligand>
</feature>
<keyword id="KW-0030">Aminoacyl-tRNA synthetase</keyword>
<keyword id="KW-0067">ATP-binding</keyword>
<keyword id="KW-0963">Cytoplasm</keyword>
<keyword id="KW-0436">Ligase</keyword>
<keyword id="KW-0460">Magnesium</keyword>
<keyword id="KW-0479">Metal-binding</keyword>
<keyword id="KW-0547">Nucleotide-binding</keyword>
<keyword id="KW-0648">Protein biosynthesis</keyword>
<keyword id="KW-0694">RNA-binding</keyword>
<keyword id="KW-0820">tRNA-binding</keyword>
<dbReference type="EC" id="6.1.1.20" evidence="1"/>
<dbReference type="EMBL" id="AE015929">
    <property type="protein sequence ID" value="AAO04429.1"/>
    <property type="molecule type" value="Genomic_DNA"/>
</dbReference>
<dbReference type="RefSeq" id="NP_764387.1">
    <property type="nucleotide sequence ID" value="NC_004461.1"/>
</dbReference>
<dbReference type="RefSeq" id="WP_002485127.1">
    <property type="nucleotide sequence ID" value="NZ_WBME01000035.1"/>
</dbReference>
<dbReference type="SMR" id="Q8CSY8"/>
<dbReference type="GeneID" id="50019030"/>
<dbReference type="KEGG" id="sep:SE_0832"/>
<dbReference type="PATRIC" id="fig|176280.10.peg.805"/>
<dbReference type="eggNOG" id="COG0072">
    <property type="taxonomic scope" value="Bacteria"/>
</dbReference>
<dbReference type="eggNOG" id="COG0073">
    <property type="taxonomic scope" value="Bacteria"/>
</dbReference>
<dbReference type="HOGENOM" id="CLU_016891_0_0_9"/>
<dbReference type="OrthoDB" id="9805455at2"/>
<dbReference type="Proteomes" id="UP000001411">
    <property type="component" value="Chromosome"/>
</dbReference>
<dbReference type="GO" id="GO:0009328">
    <property type="term" value="C:phenylalanine-tRNA ligase complex"/>
    <property type="evidence" value="ECO:0007669"/>
    <property type="project" value="TreeGrafter"/>
</dbReference>
<dbReference type="GO" id="GO:0005524">
    <property type="term" value="F:ATP binding"/>
    <property type="evidence" value="ECO:0007669"/>
    <property type="project" value="UniProtKB-UniRule"/>
</dbReference>
<dbReference type="GO" id="GO:0140096">
    <property type="term" value="F:catalytic activity, acting on a protein"/>
    <property type="evidence" value="ECO:0007669"/>
    <property type="project" value="UniProtKB-ARBA"/>
</dbReference>
<dbReference type="GO" id="GO:0000287">
    <property type="term" value="F:magnesium ion binding"/>
    <property type="evidence" value="ECO:0007669"/>
    <property type="project" value="UniProtKB-UniRule"/>
</dbReference>
<dbReference type="GO" id="GO:0004826">
    <property type="term" value="F:phenylalanine-tRNA ligase activity"/>
    <property type="evidence" value="ECO:0007669"/>
    <property type="project" value="UniProtKB-UniRule"/>
</dbReference>
<dbReference type="GO" id="GO:0016740">
    <property type="term" value="F:transferase activity"/>
    <property type="evidence" value="ECO:0007669"/>
    <property type="project" value="UniProtKB-ARBA"/>
</dbReference>
<dbReference type="GO" id="GO:0000049">
    <property type="term" value="F:tRNA binding"/>
    <property type="evidence" value="ECO:0007669"/>
    <property type="project" value="UniProtKB-KW"/>
</dbReference>
<dbReference type="GO" id="GO:0006432">
    <property type="term" value="P:phenylalanyl-tRNA aminoacylation"/>
    <property type="evidence" value="ECO:0007669"/>
    <property type="project" value="UniProtKB-UniRule"/>
</dbReference>
<dbReference type="CDD" id="cd00769">
    <property type="entry name" value="PheRS_beta_core"/>
    <property type="match status" value="1"/>
</dbReference>
<dbReference type="CDD" id="cd02796">
    <property type="entry name" value="tRNA_bind_bactPheRS"/>
    <property type="match status" value="1"/>
</dbReference>
<dbReference type="FunFam" id="2.40.50.140:FF:000045">
    <property type="entry name" value="Phenylalanine--tRNA ligase beta subunit"/>
    <property type="match status" value="1"/>
</dbReference>
<dbReference type="FunFam" id="3.30.56.10:FF:000002">
    <property type="entry name" value="Phenylalanine--tRNA ligase beta subunit"/>
    <property type="match status" value="1"/>
</dbReference>
<dbReference type="FunFam" id="3.30.70.380:FF:000001">
    <property type="entry name" value="Phenylalanine--tRNA ligase beta subunit"/>
    <property type="match status" value="1"/>
</dbReference>
<dbReference type="FunFam" id="3.30.930.10:FF:000022">
    <property type="entry name" value="Phenylalanine--tRNA ligase beta subunit"/>
    <property type="match status" value="1"/>
</dbReference>
<dbReference type="FunFam" id="3.50.40.10:FF:000001">
    <property type="entry name" value="Phenylalanine--tRNA ligase beta subunit"/>
    <property type="match status" value="1"/>
</dbReference>
<dbReference type="Gene3D" id="3.30.56.10">
    <property type="match status" value="2"/>
</dbReference>
<dbReference type="Gene3D" id="3.30.930.10">
    <property type="entry name" value="Bira Bifunctional Protein, Domain 2"/>
    <property type="match status" value="1"/>
</dbReference>
<dbReference type="Gene3D" id="3.30.70.380">
    <property type="entry name" value="Ferrodoxin-fold anticodon-binding domain"/>
    <property type="match status" value="1"/>
</dbReference>
<dbReference type="Gene3D" id="2.40.50.140">
    <property type="entry name" value="Nucleic acid-binding proteins"/>
    <property type="match status" value="1"/>
</dbReference>
<dbReference type="Gene3D" id="3.50.40.10">
    <property type="entry name" value="Phenylalanyl-trna Synthetase, Chain B, domain 3"/>
    <property type="match status" value="1"/>
</dbReference>
<dbReference type="HAMAP" id="MF_00283">
    <property type="entry name" value="Phe_tRNA_synth_beta1"/>
    <property type="match status" value="1"/>
</dbReference>
<dbReference type="InterPro" id="IPR045864">
    <property type="entry name" value="aa-tRNA-synth_II/BPL/LPL"/>
</dbReference>
<dbReference type="InterPro" id="IPR005146">
    <property type="entry name" value="B3/B4_tRNA-bd"/>
</dbReference>
<dbReference type="InterPro" id="IPR009061">
    <property type="entry name" value="DNA-bd_dom_put_sf"/>
</dbReference>
<dbReference type="InterPro" id="IPR005121">
    <property type="entry name" value="Fdx_antiC-bd"/>
</dbReference>
<dbReference type="InterPro" id="IPR036690">
    <property type="entry name" value="Fdx_antiC-bd_sf"/>
</dbReference>
<dbReference type="InterPro" id="IPR012340">
    <property type="entry name" value="NA-bd_OB-fold"/>
</dbReference>
<dbReference type="InterPro" id="IPR045060">
    <property type="entry name" value="Phe-tRNA-ligase_IIc_bsu"/>
</dbReference>
<dbReference type="InterPro" id="IPR004532">
    <property type="entry name" value="Phe-tRNA-ligase_IIc_bsu_bact"/>
</dbReference>
<dbReference type="InterPro" id="IPR020825">
    <property type="entry name" value="Phe-tRNA_synthase-like_B3/B4"/>
</dbReference>
<dbReference type="InterPro" id="IPR041616">
    <property type="entry name" value="PheRS_beta_core"/>
</dbReference>
<dbReference type="InterPro" id="IPR002547">
    <property type="entry name" value="tRNA-bd_dom"/>
</dbReference>
<dbReference type="InterPro" id="IPR033714">
    <property type="entry name" value="tRNA_bind_bactPheRS"/>
</dbReference>
<dbReference type="InterPro" id="IPR005147">
    <property type="entry name" value="tRNA_synthase_B5-dom"/>
</dbReference>
<dbReference type="NCBIfam" id="TIGR00472">
    <property type="entry name" value="pheT_bact"/>
    <property type="match status" value="1"/>
</dbReference>
<dbReference type="NCBIfam" id="NF045760">
    <property type="entry name" value="YtpR"/>
    <property type="match status" value="1"/>
</dbReference>
<dbReference type="PANTHER" id="PTHR10947:SF0">
    <property type="entry name" value="PHENYLALANINE--TRNA LIGASE BETA SUBUNIT"/>
    <property type="match status" value="1"/>
</dbReference>
<dbReference type="PANTHER" id="PTHR10947">
    <property type="entry name" value="PHENYLALANYL-TRNA SYNTHETASE BETA CHAIN AND LEUCINE-RICH REPEAT-CONTAINING PROTEIN 47"/>
    <property type="match status" value="1"/>
</dbReference>
<dbReference type="Pfam" id="PF03483">
    <property type="entry name" value="B3_4"/>
    <property type="match status" value="1"/>
</dbReference>
<dbReference type="Pfam" id="PF03484">
    <property type="entry name" value="B5"/>
    <property type="match status" value="1"/>
</dbReference>
<dbReference type="Pfam" id="PF03147">
    <property type="entry name" value="FDX-ACB"/>
    <property type="match status" value="1"/>
</dbReference>
<dbReference type="Pfam" id="PF01588">
    <property type="entry name" value="tRNA_bind"/>
    <property type="match status" value="1"/>
</dbReference>
<dbReference type="Pfam" id="PF17759">
    <property type="entry name" value="tRNA_synthFbeta"/>
    <property type="match status" value="1"/>
</dbReference>
<dbReference type="SMART" id="SM00873">
    <property type="entry name" value="B3_4"/>
    <property type="match status" value="1"/>
</dbReference>
<dbReference type="SMART" id="SM00874">
    <property type="entry name" value="B5"/>
    <property type="match status" value="1"/>
</dbReference>
<dbReference type="SMART" id="SM00896">
    <property type="entry name" value="FDX-ACB"/>
    <property type="match status" value="1"/>
</dbReference>
<dbReference type="SUPFAM" id="SSF54991">
    <property type="entry name" value="Anticodon-binding domain of PheRS"/>
    <property type="match status" value="1"/>
</dbReference>
<dbReference type="SUPFAM" id="SSF55681">
    <property type="entry name" value="Class II aaRS and biotin synthetases"/>
    <property type="match status" value="1"/>
</dbReference>
<dbReference type="SUPFAM" id="SSF50249">
    <property type="entry name" value="Nucleic acid-binding proteins"/>
    <property type="match status" value="1"/>
</dbReference>
<dbReference type="SUPFAM" id="SSF56037">
    <property type="entry name" value="PheT/TilS domain"/>
    <property type="match status" value="1"/>
</dbReference>
<dbReference type="SUPFAM" id="SSF46955">
    <property type="entry name" value="Putative DNA-binding domain"/>
    <property type="match status" value="1"/>
</dbReference>
<dbReference type="PROSITE" id="PS51483">
    <property type="entry name" value="B5"/>
    <property type="match status" value="1"/>
</dbReference>
<dbReference type="PROSITE" id="PS51447">
    <property type="entry name" value="FDX_ACB"/>
    <property type="match status" value="1"/>
</dbReference>
<dbReference type="PROSITE" id="PS50886">
    <property type="entry name" value="TRBD"/>
    <property type="match status" value="1"/>
</dbReference>
<protein>
    <recommendedName>
        <fullName evidence="1">Phenylalanine--tRNA ligase beta subunit</fullName>
        <ecNumber evidence="1">6.1.1.20</ecNumber>
    </recommendedName>
    <alternativeName>
        <fullName evidence="1">Phenylalanyl-tRNA synthetase beta subunit</fullName>
        <shortName evidence="1">PheRS</shortName>
    </alternativeName>
</protein>
<reference key="1">
    <citation type="journal article" date="2003" name="Mol. Microbiol.">
        <title>Genome-based analysis of virulence genes in a non-biofilm-forming Staphylococcus epidermidis strain (ATCC 12228).</title>
        <authorList>
            <person name="Zhang Y.-Q."/>
            <person name="Ren S.-X."/>
            <person name="Li H.-L."/>
            <person name="Wang Y.-X."/>
            <person name="Fu G."/>
            <person name="Yang J."/>
            <person name="Qin Z.-Q."/>
            <person name="Miao Y.-G."/>
            <person name="Wang W.-Y."/>
            <person name="Chen R.-S."/>
            <person name="Shen Y."/>
            <person name="Chen Z."/>
            <person name="Yuan Z.-H."/>
            <person name="Zhao G.-P."/>
            <person name="Qu D."/>
            <person name="Danchin A."/>
            <person name="Wen Y.-M."/>
        </authorList>
    </citation>
    <scope>NUCLEOTIDE SEQUENCE [LARGE SCALE GENOMIC DNA]</scope>
    <source>
        <strain>ATCC 12228 / FDA PCI 1200</strain>
    </source>
</reference>
<organism>
    <name type="scientific">Staphylococcus epidermidis (strain ATCC 12228 / FDA PCI 1200)</name>
    <dbReference type="NCBI Taxonomy" id="176280"/>
    <lineage>
        <taxon>Bacteria</taxon>
        <taxon>Bacillati</taxon>
        <taxon>Bacillota</taxon>
        <taxon>Bacilli</taxon>
        <taxon>Bacillales</taxon>
        <taxon>Staphylococcaceae</taxon>
        <taxon>Staphylococcus</taxon>
    </lineage>
</organism>
<name>SYFB_STAES</name>
<sequence length="800" mass="89432">MLISNEWLKDYVNVDQSVQALAERITRTGIEVDDIIDYTKDIKKLVVGHVLSKTPHPNADKLNICQVDLGEEEPVQIVCGAPNVDEGQHVIVAKVGGRLPGGIKIKRAKLRGERSEGMICSLQEIGISSHVTPKNYESGIYVFPEAVKPGTDALEAIYLNDQVMEFDLTPNRADALSMVGTAYEVAALYQTKMNKPQLTSNESQESAKDELTIEVKNEDKVPYYSTRVVHDVTIGPSPVWMQFRLIKAGIRPINNVVDISNYVLLEYGQPLHMFDQEQIGSQSIEVRQAKKDETMRTLDGEERRLLDTDIVITNGKDPIALGGVMGGDFSEVTEQTRHVVVEGAIFDPVSIRHTSRRLNLRSESSSRFEKGIATEFVDEAVDRACYLLERYASGTVLKDRVSHGDLGSFVTPIEITADKVNRTIGFNLTDEEIIDIFEQLGFDTENKNGEITVNVPSRRKDISIKEDLIEEVARIYGYDEIPSTLPVFKDVTSGELTDRQFKTRTVKETLEGAGLDQAITYSLVSKNHATDFALQNRPTIELLMPMSEAHSTLRQSLLPHLIDAVSYNVARKNTNVKLYEIGRVFFGNGEGELPDEVEYLSGILTGDFVNNTWQGKKESVDFYLTKGVVERIAEKLNLQFDFRAGQIDGLHPGRTAIVSLNGKDIGFIGELHPTLAANNDLKRTYVFELNYDAMMEVSVGYINYEPIPRFPGVTRDIALEVNHEVTSSELLSIIHENGEDILNDTLVFDVYEGEHLEKGKKSIAIRLSYLDTENTLTDERVNAVHDKILEALKKHGAIIR</sequence>
<gene>
    <name evidence="1" type="primary">pheT</name>
    <name type="ordered locus">SE_0832</name>
</gene>
<comment type="catalytic activity">
    <reaction evidence="1">
        <text>tRNA(Phe) + L-phenylalanine + ATP = L-phenylalanyl-tRNA(Phe) + AMP + diphosphate + H(+)</text>
        <dbReference type="Rhea" id="RHEA:19413"/>
        <dbReference type="Rhea" id="RHEA-COMP:9668"/>
        <dbReference type="Rhea" id="RHEA-COMP:9699"/>
        <dbReference type="ChEBI" id="CHEBI:15378"/>
        <dbReference type="ChEBI" id="CHEBI:30616"/>
        <dbReference type="ChEBI" id="CHEBI:33019"/>
        <dbReference type="ChEBI" id="CHEBI:58095"/>
        <dbReference type="ChEBI" id="CHEBI:78442"/>
        <dbReference type="ChEBI" id="CHEBI:78531"/>
        <dbReference type="ChEBI" id="CHEBI:456215"/>
        <dbReference type="EC" id="6.1.1.20"/>
    </reaction>
</comment>
<comment type="cofactor">
    <cofactor evidence="1">
        <name>Mg(2+)</name>
        <dbReference type="ChEBI" id="CHEBI:18420"/>
    </cofactor>
    <text evidence="1">Binds 2 magnesium ions per tetramer.</text>
</comment>
<comment type="subunit">
    <text evidence="1">Tetramer of two alpha and two beta subunits.</text>
</comment>
<comment type="subcellular location">
    <subcellularLocation>
        <location>Cytoplasm</location>
    </subcellularLocation>
</comment>
<comment type="similarity">
    <text evidence="1">Belongs to the phenylalanyl-tRNA synthetase beta subunit family. Type 1 subfamily.</text>
</comment>
<evidence type="ECO:0000255" key="1">
    <source>
        <dbReference type="HAMAP-Rule" id="MF_00283"/>
    </source>
</evidence>
<proteinExistence type="inferred from homology"/>
<accession>Q8CSY8</accession>